<proteinExistence type="inferred from homology"/>
<protein>
    <recommendedName>
        <fullName>Cytochrome b</fullName>
    </recommendedName>
    <alternativeName>
        <fullName>Complex III subunit 3</fullName>
    </alternativeName>
    <alternativeName>
        <fullName>Complex III subunit III</fullName>
    </alternativeName>
    <alternativeName>
        <fullName>Cytochrome b-c1 complex subunit 3</fullName>
    </alternativeName>
    <alternativeName>
        <fullName>Ubiquinol-cytochrome-c reductase complex cytochrome b subunit</fullName>
    </alternativeName>
</protein>
<keyword id="KW-0249">Electron transport</keyword>
<keyword id="KW-0349">Heme</keyword>
<keyword id="KW-0408">Iron</keyword>
<keyword id="KW-0472">Membrane</keyword>
<keyword id="KW-0479">Metal-binding</keyword>
<keyword id="KW-0496">Mitochondrion</keyword>
<keyword id="KW-0999">Mitochondrion inner membrane</keyword>
<keyword id="KW-0679">Respiratory chain</keyword>
<keyword id="KW-0812">Transmembrane</keyword>
<keyword id="KW-1133">Transmembrane helix</keyword>
<keyword id="KW-0813">Transport</keyword>
<keyword id="KW-0830">Ubiquinone</keyword>
<comment type="function">
    <text evidence="2">Component of the ubiquinol-cytochrome c reductase complex (complex III or cytochrome b-c1 complex) that is part of the mitochondrial respiratory chain. The b-c1 complex mediates electron transfer from ubiquinol to cytochrome c. Contributes to the generation of a proton gradient across the mitochondrial membrane that is then used for ATP synthesis.</text>
</comment>
<comment type="cofactor">
    <cofactor evidence="2">
        <name>heme b</name>
        <dbReference type="ChEBI" id="CHEBI:60344"/>
    </cofactor>
    <text evidence="2">Binds 2 heme b groups non-covalently.</text>
</comment>
<comment type="subunit">
    <text evidence="2">The cytochrome bc1 complex contains 11 subunits: 3 respiratory subunits (MT-CYB, CYC1 and UQCRFS1), 2 core proteins (UQCRC1 and UQCRC2) and 6 low-molecular weight proteins (UQCRH/QCR6, UQCRB/QCR7, UQCRQ/QCR8, UQCR10/QCR9, UQCR11/QCR10 and a cleavage product of UQCRFS1). This cytochrome bc1 complex then forms a dimer.</text>
</comment>
<comment type="subcellular location">
    <subcellularLocation>
        <location evidence="2">Mitochondrion inner membrane</location>
        <topology evidence="2">Multi-pass membrane protein</topology>
    </subcellularLocation>
</comment>
<comment type="miscellaneous">
    <text evidence="1">Heme 1 (or BL or b562) is low-potential and absorbs at about 562 nm, and heme 2 (or BH or b566) is high-potential and absorbs at about 566 nm.</text>
</comment>
<comment type="similarity">
    <text evidence="3 4">Belongs to the cytochrome b family.</text>
</comment>
<comment type="caution">
    <text evidence="2">The full-length protein contains only eight transmembrane helices, not nine as predicted by bioinformatics tools.</text>
</comment>
<feature type="chain" id="PRO_0000255101" description="Cytochrome b">
    <location>
        <begin position="1"/>
        <end position="379"/>
    </location>
</feature>
<feature type="transmembrane region" description="Helical" evidence="2">
    <location>
        <begin position="33"/>
        <end position="53"/>
    </location>
</feature>
<feature type="transmembrane region" description="Helical" evidence="2">
    <location>
        <begin position="77"/>
        <end position="98"/>
    </location>
</feature>
<feature type="transmembrane region" description="Helical" evidence="2">
    <location>
        <begin position="113"/>
        <end position="133"/>
    </location>
</feature>
<feature type="transmembrane region" description="Helical" evidence="2">
    <location>
        <begin position="178"/>
        <end position="198"/>
    </location>
</feature>
<feature type="transmembrane region" description="Helical" evidence="2">
    <location>
        <begin position="226"/>
        <end position="246"/>
    </location>
</feature>
<feature type="transmembrane region" description="Helical" evidence="2">
    <location>
        <begin position="288"/>
        <end position="308"/>
    </location>
</feature>
<feature type="transmembrane region" description="Helical" evidence="2">
    <location>
        <begin position="320"/>
        <end position="340"/>
    </location>
</feature>
<feature type="transmembrane region" description="Helical" evidence="2">
    <location>
        <begin position="347"/>
        <end position="367"/>
    </location>
</feature>
<feature type="binding site" description="axial binding residue" evidence="2">
    <location>
        <position position="83"/>
    </location>
    <ligand>
        <name>heme b</name>
        <dbReference type="ChEBI" id="CHEBI:60344"/>
        <label>b562</label>
    </ligand>
    <ligandPart>
        <name>Fe</name>
        <dbReference type="ChEBI" id="CHEBI:18248"/>
    </ligandPart>
</feature>
<feature type="binding site" description="axial binding residue" evidence="2">
    <location>
        <position position="97"/>
    </location>
    <ligand>
        <name>heme b</name>
        <dbReference type="ChEBI" id="CHEBI:60344"/>
        <label>b566</label>
    </ligand>
    <ligandPart>
        <name>Fe</name>
        <dbReference type="ChEBI" id="CHEBI:18248"/>
    </ligandPart>
</feature>
<feature type="binding site" description="axial binding residue" evidence="2">
    <location>
        <position position="182"/>
    </location>
    <ligand>
        <name>heme b</name>
        <dbReference type="ChEBI" id="CHEBI:60344"/>
        <label>b562</label>
    </ligand>
    <ligandPart>
        <name>Fe</name>
        <dbReference type="ChEBI" id="CHEBI:18248"/>
    </ligandPart>
</feature>
<feature type="binding site" description="axial binding residue" evidence="2">
    <location>
        <position position="196"/>
    </location>
    <ligand>
        <name>heme b</name>
        <dbReference type="ChEBI" id="CHEBI:60344"/>
        <label>b566</label>
    </ligand>
    <ligandPart>
        <name>Fe</name>
        <dbReference type="ChEBI" id="CHEBI:18248"/>
    </ligandPart>
</feature>
<feature type="binding site" evidence="2">
    <location>
        <position position="201"/>
    </location>
    <ligand>
        <name>a ubiquinone</name>
        <dbReference type="ChEBI" id="CHEBI:16389"/>
    </ligand>
</feature>
<geneLocation type="mitochondrion"/>
<reference key="1">
    <citation type="journal article" date="1996" name="Mol. Phylogenet. Evol.">
        <title>The simultaneous diversification of South American echimyid rodents (Hystricognathi) based on complete cytochrome b sequences.</title>
        <authorList>
            <person name="Lara M.C."/>
            <person name="Patton J.L."/>
            <person name="da Silva M.N.F."/>
        </authorList>
    </citation>
    <scope>NUCLEOTIDE SEQUENCE [GENOMIC DNA]</scope>
</reference>
<gene>
    <name type="primary">MT-CYB</name>
    <name type="synonym">COB</name>
    <name type="synonym">CYTB</name>
    <name type="synonym">MTCYB</name>
</gene>
<dbReference type="EMBL" id="U35412">
    <property type="protein sequence ID" value="AAC52547.1"/>
    <property type="molecule type" value="Genomic_DNA"/>
</dbReference>
<dbReference type="SMR" id="Q35118"/>
<dbReference type="GO" id="GO:0005743">
    <property type="term" value="C:mitochondrial inner membrane"/>
    <property type="evidence" value="ECO:0007669"/>
    <property type="project" value="UniProtKB-SubCell"/>
</dbReference>
<dbReference type="GO" id="GO:0045275">
    <property type="term" value="C:respiratory chain complex III"/>
    <property type="evidence" value="ECO:0007669"/>
    <property type="project" value="InterPro"/>
</dbReference>
<dbReference type="GO" id="GO:0046872">
    <property type="term" value="F:metal ion binding"/>
    <property type="evidence" value="ECO:0007669"/>
    <property type="project" value="UniProtKB-KW"/>
</dbReference>
<dbReference type="GO" id="GO:0008121">
    <property type="term" value="F:ubiquinol-cytochrome-c reductase activity"/>
    <property type="evidence" value="ECO:0007669"/>
    <property type="project" value="InterPro"/>
</dbReference>
<dbReference type="GO" id="GO:0006122">
    <property type="term" value="P:mitochondrial electron transport, ubiquinol to cytochrome c"/>
    <property type="evidence" value="ECO:0007669"/>
    <property type="project" value="TreeGrafter"/>
</dbReference>
<dbReference type="CDD" id="cd00290">
    <property type="entry name" value="cytochrome_b_C"/>
    <property type="match status" value="1"/>
</dbReference>
<dbReference type="CDD" id="cd00284">
    <property type="entry name" value="Cytochrome_b_N"/>
    <property type="match status" value="1"/>
</dbReference>
<dbReference type="FunFam" id="1.20.810.10:FF:000002">
    <property type="entry name" value="Cytochrome b"/>
    <property type="match status" value="1"/>
</dbReference>
<dbReference type="Gene3D" id="1.20.810.10">
    <property type="entry name" value="Cytochrome Bc1 Complex, Chain C"/>
    <property type="match status" value="1"/>
</dbReference>
<dbReference type="InterPro" id="IPR005798">
    <property type="entry name" value="Cyt_b/b6_C"/>
</dbReference>
<dbReference type="InterPro" id="IPR036150">
    <property type="entry name" value="Cyt_b/b6_C_sf"/>
</dbReference>
<dbReference type="InterPro" id="IPR005797">
    <property type="entry name" value="Cyt_b/b6_N"/>
</dbReference>
<dbReference type="InterPro" id="IPR027387">
    <property type="entry name" value="Cytb/b6-like_sf"/>
</dbReference>
<dbReference type="InterPro" id="IPR030689">
    <property type="entry name" value="Cytochrome_b"/>
</dbReference>
<dbReference type="InterPro" id="IPR048260">
    <property type="entry name" value="Cytochrome_b_C_euk/bac"/>
</dbReference>
<dbReference type="InterPro" id="IPR048259">
    <property type="entry name" value="Cytochrome_b_N_euk/bac"/>
</dbReference>
<dbReference type="InterPro" id="IPR016174">
    <property type="entry name" value="Di-haem_cyt_TM"/>
</dbReference>
<dbReference type="PANTHER" id="PTHR19271">
    <property type="entry name" value="CYTOCHROME B"/>
    <property type="match status" value="1"/>
</dbReference>
<dbReference type="PANTHER" id="PTHR19271:SF16">
    <property type="entry name" value="CYTOCHROME B"/>
    <property type="match status" value="1"/>
</dbReference>
<dbReference type="Pfam" id="PF00032">
    <property type="entry name" value="Cytochrom_B_C"/>
    <property type="match status" value="1"/>
</dbReference>
<dbReference type="Pfam" id="PF00033">
    <property type="entry name" value="Cytochrome_B"/>
    <property type="match status" value="1"/>
</dbReference>
<dbReference type="PIRSF" id="PIRSF038885">
    <property type="entry name" value="COB"/>
    <property type="match status" value="1"/>
</dbReference>
<dbReference type="SUPFAM" id="SSF81648">
    <property type="entry name" value="a domain/subunit of cytochrome bc1 complex (Ubiquinol-cytochrome c reductase)"/>
    <property type="match status" value="1"/>
</dbReference>
<dbReference type="SUPFAM" id="SSF81342">
    <property type="entry name" value="Transmembrane di-heme cytochromes"/>
    <property type="match status" value="1"/>
</dbReference>
<dbReference type="PROSITE" id="PS51003">
    <property type="entry name" value="CYTB_CTER"/>
    <property type="match status" value="1"/>
</dbReference>
<dbReference type="PROSITE" id="PS51002">
    <property type="entry name" value="CYTB_NTER"/>
    <property type="match status" value="1"/>
</dbReference>
<name>CYB_PHYBS</name>
<accession>Q35118</accession>
<organism>
    <name type="scientific">Phyllomys brasiliensis</name>
    <name type="common">Orange-brown Atlantic tree-rat</name>
    <name type="synonym">Nelomys brasiliensis</name>
    <dbReference type="NCBI Taxonomy" id="466158"/>
    <lineage>
        <taxon>Eukaryota</taxon>
        <taxon>Metazoa</taxon>
        <taxon>Chordata</taxon>
        <taxon>Craniata</taxon>
        <taxon>Vertebrata</taxon>
        <taxon>Euteleostomi</taxon>
        <taxon>Mammalia</taxon>
        <taxon>Eutheria</taxon>
        <taxon>Euarchontoglires</taxon>
        <taxon>Glires</taxon>
        <taxon>Rodentia</taxon>
        <taxon>Hystricomorpha</taxon>
        <taxon>Echimyidae</taxon>
        <taxon>Phyllomys</taxon>
    </lineage>
</organism>
<evidence type="ECO:0000250" key="1"/>
<evidence type="ECO:0000250" key="2">
    <source>
        <dbReference type="UniProtKB" id="P00157"/>
    </source>
</evidence>
<evidence type="ECO:0000255" key="3">
    <source>
        <dbReference type="PROSITE-ProRule" id="PRU00967"/>
    </source>
</evidence>
<evidence type="ECO:0000255" key="4">
    <source>
        <dbReference type="PROSITE-ProRule" id="PRU00968"/>
    </source>
</evidence>
<sequence>MTNIRKSHPLIKIINHSFIDLPTPSNISAWWNFGSLLGMCLALQIITGLFLAMHYTADTTTAFSSVTHICRDVNYGWLIRYTHANGASMFFIFLYFHIGRGIYYGSYTYTETWNIGVILLFTVMATAFMGYVLPWGQMSFWGATVITNLLSAIPYIGPTLVEWIWGGFSVDKATLTRFFAFHFVLPFIVTAMVMIHLLFLHETGSNNPSGVNSDSDKIPFHPYYTIKDILGLLFMFITLTMLILFSPDLLVDPDNYTPANPLNTPPHIKPEWYFLFAYAILRSIPNKLGGVIALVFSILILVLLPIIHTSKQRSMSFRPFSQYLLWILVANLMILTWIGSQPVEYPFITIGQLASISYFCIILIIMPATSYMENKMLKW</sequence>